<evidence type="ECO:0000256" key="1">
    <source>
        <dbReference type="SAM" id="MobiDB-lite"/>
    </source>
</evidence>
<evidence type="ECO:0000269" key="2">
    <source>
    </source>
</evidence>
<evidence type="ECO:0000305" key="3"/>
<evidence type="ECO:0007744" key="4">
    <source>
        <dbReference type="PDB" id="7CPU"/>
    </source>
</evidence>
<evidence type="ECO:0007744" key="5">
    <source>
        <dbReference type="PDB" id="7CPV"/>
    </source>
</evidence>
<comment type="function">
    <text evidence="2">Component of the large ribosomal subunit (PubMed:36517592). The ribosome is a large ribonucleoprotein complex responsible for the synthesis of proteins in the cell (PubMed:36517592).</text>
</comment>
<comment type="subunit">
    <text evidence="2">Component of the large ribosomal subunit.</text>
</comment>
<comment type="subcellular location">
    <subcellularLocation>
        <location evidence="2">Cytoplasm</location>
    </subcellularLocation>
</comment>
<comment type="similarity">
    <text evidence="3">Belongs to the eukaryotic ribosomal protein eL42 family.</text>
</comment>
<keyword id="KW-0002">3D-structure</keyword>
<keyword id="KW-0963">Cytoplasm</keyword>
<keyword id="KW-1185">Reference proteome</keyword>
<keyword id="KW-0687">Ribonucleoprotein</keyword>
<keyword id="KW-0689">Ribosomal protein</keyword>
<organism>
    <name type="scientific">Mus musculus</name>
    <name type="common">Mouse</name>
    <dbReference type="NCBI Taxonomy" id="10090"/>
    <lineage>
        <taxon>Eukaryota</taxon>
        <taxon>Metazoa</taxon>
        <taxon>Chordata</taxon>
        <taxon>Craniata</taxon>
        <taxon>Vertebrata</taxon>
        <taxon>Euteleostomi</taxon>
        <taxon>Mammalia</taxon>
        <taxon>Eutheria</taxon>
        <taxon>Euarchontoglires</taxon>
        <taxon>Glires</taxon>
        <taxon>Rodentia</taxon>
        <taxon>Myomorpha</taxon>
        <taxon>Muroidea</taxon>
        <taxon>Muridae</taxon>
        <taxon>Murinae</taxon>
        <taxon>Mus</taxon>
        <taxon>Mus</taxon>
    </lineage>
</organism>
<gene>
    <name type="primary">Rpl36a</name>
    <name type="synonym">Rpl44</name>
</gene>
<dbReference type="EMBL" id="U58105">
    <property type="protein sequence ID" value="AAB47245.1"/>
    <property type="molecule type" value="Genomic_DNA"/>
</dbReference>
<dbReference type="EMBL" id="AK002540">
    <property type="protein sequence ID" value="BAB22175.1"/>
    <property type="molecule type" value="mRNA"/>
</dbReference>
<dbReference type="EMBL" id="AK003166">
    <property type="protein sequence ID" value="BAB22616.1"/>
    <property type="molecule type" value="mRNA"/>
</dbReference>
<dbReference type="EMBL" id="AK010629">
    <property type="protein sequence ID" value="BAB27075.1"/>
    <property type="molecule type" value="mRNA"/>
</dbReference>
<dbReference type="EMBL" id="AK012502">
    <property type="protein sequence ID" value="BAB28285.1"/>
    <property type="molecule type" value="mRNA"/>
</dbReference>
<dbReference type="EMBL" id="BC019810">
    <property type="protein sequence ID" value="AAH19810.1"/>
    <property type="molecule type" value="mRNA"/>
</dbReference>
<dbReference type="EMBL" id="BC027515">
    <property type="protein sequence ID" value="AAH27515.1"/>
    <property type="molecule type" value="mRNA"/>
</dbReference>
<dbReference type="EMBL" id="BC081439">
    <property type="protein sequence ID" value="AAH81439.1"/>
    <property type="molecule type" value="mRNA"/>
</dbReference>
<dbReference type="EMBL" id="BC081440">
    <property type="protein sequence ID" value="AAH81440.1"/>
    <property type="molecule type" value="mRNA"/>
</dbReference>
<dbReference type="CCDS" id="CCDS41123.1"/>
<dbReference type="RefSeq" id="NP_063918.1">
    <property type="nucleotide sequence ID" value="NM_019865.5"/>
</dbReference>
<dbReference type="RefSeq" id="NP_079865.1">
    <property type="nucleotide sequence ID" value="NM_025589.4"/>
</dbReference>
<dbReference type="PDB" id="7CPU">
    <property type="method" value="EM"/>
    <property type="resolution" value="2.82 A"/>
    <property type="chains" value="Lo=1-106"/>
</dbReference>
<dbReference type="PDB" id="7CPV">
    <property type="method" value="EM"/>
    <property type="resolution" value="3.03 A"/>
    <property type="chains" value="Lo=1-106"/>
</dbReference>
<dbReference type="PDB" id="7LS1">
    <property type="method" value="EM"/>
    <property type="resolution" value="3.30 A"/>
    <property type="chains" value="i2=1-106"/>
</dbReference>
<dbReference type="PDB" id="7LS2">
    <property type="method" value="EM"/>
    <property type="resolution" value="3.10 A"/>
    <property type="chains" value="i2=1-106"/>
</dbReference>
<dbReference type="PDBsum" id="7CPU"/>
<dbReference type="PDBsum" id="7CPV"/>
<dbReference type="PDBsum" id="7LS1"/>
<dbReference type="PDBsum" id="7LS2"/>
<dbReference type="EMDB" id="EMD-23500"/>
<dbReference type="EMDB" id="EMD-23501"/>
<dbReference type="EMDB" id="EMD-30432"/>
<dbReference type="EMDB" id="EMD-30433"/>
<dbReference type="SMR" id="P83882"/>
<dbReference type="BioGRID" id="202985">
    <property type="interactions" value="52"/>
</dbReference>
<dbReference type="BioGRID" id="211507">
    <property type="interactions" value="4"/>
</dbReference>
<dbReference type="ComplexPortal" id="CPX-5262">
    <property type="entry name" value="60S cytosolic large ribosomal subunit"/>
</dbReference>
<dbReference type="ComplexPortal" id="CPX-7662">
    <property type="entry name" value="60S cytosolic large ribosomal subunit, testis-specific variant"/>
</dbReference>
<dbReference type="ComplexPortal" id="CPX-7663">
    <property type="entry name" value="60S cytosolic large ribosomal subunit, striated muscle variant"/>
</dbReference>
<dbReference type="FunCoup" id="P83882">
    <property type="interactions" value="1938"/>
</dbReference>
<dbReference type="STRING" id="10090.ENSMUSP00000106249"/>
<dbReference type="GlyGen" id="P83882">
    <property type="glycosylation" value="1 site, 1 O-linked glycan (1 site)"/>
</dbReference>
<dbReference type="iPTMnet" id="P83882"/>
<dbReference type="PhosphoSitePlus" id="P83882"/>
<dbReference type="SwissPalm" id="P83882"/>
<dbReference type="jPOST" id="P83882"/>
<dbReference type="PaxDb" id="10090-ENSMUSP00000106249"/>
<dbReference type="PeptideAtlas" id="P83882"/>
<dbReference type="ProteomicsDB" id="253310"/>
<dbReference type="Pumba" id="P83882"/>
<dbReference type="TopDownProteomics" id="P83882"/>
<dbReference type="Antibodypedia" id="34835">
    <property type="antibodies" value="131 antibodies from 20 providers"/>
</dbReference>
<dbReference type="DNASU" id="19982"/>
<dbReference type="DNASU" id="66483"/>
<dbReference type="Ensembl" id="ENSMUST00000054544.7">
    <property type="protein sequence ID" value="ENSMUSP00000059766.7"/>
    <property type="gene ID" value="ENSMUSG00000049751.7"/>
</dbReference>
<dbReference type="Ensembl" id="ENSMUST00000110619.2">
    <property type="protein sequence ID" value="ENSMUSP00000106249.2"/>
    <property type="gene ID" value="ENSMUSG00000049751.7"/>
</dbReference>
<dbReference type="Ensembl" id="ENSMUST00000110620.2">
    <property type="protein sequence ID" value="ENSMUSP00000106250.2"/>
    <property type="gene ID" value="ENSMUSG00000049751.7"/>
</dbReference>
<dbReference type="Ensembl" id="ENSMUST00000113211.8">
    <property type="protein sequence ID" value="ENSMUSP00000108837.2"/>
    <property type="gene ID" value="ENSMUSG00000079435.10"/>
</dbReference>
<dbReference type="GeneID" id="19982"/>
<dbReference type="GeneID" id="66483"/>
<dbReference type="KEGG" id="mmu:19982"/>
<dbReference type="KEGG" id="mmu:66483"/>
<dbReference type="UCSC" id="uc007nrs.2">
    <property type="organism name" value="mouse"/>
</dbReference>
<dbReference type="AGR" id="MGI:1201789"/>
<dbReference type="CTD" id="6166"/>
<dbReference type="CTD" id="6173"/>
<dbReference type="MGI" id="MGI:1201789">
    <property type="gene designation" value="Rpl36a"/>
</dbReference>
<dbReference type="VEuPathDB" id="HostDB:ENSMUSG00000049751"/>
<dbReference type="VEuPathDB" id="HostDB:ENSMUSG00000079435"/>
<dbReference type="eggNOG" id="KOG3464">
    <property type="taxonomic scope" value="Eukaryota"/>
</dbReference>
<dbReference type="GeneTree" id="ENSGT00390000018085"/>
<dbReference type="HOGENOM" id="CLU_114645_2_1_1"/>
<dbReference type="InParanoid" id="P83882"/>
<dbReference type="OMA" id="CKKHTIH"/>
<dbReference type="OrthoDB" id="2967263at2759"/>
<dbReference type="PhylomeDB" id="P83882"/>
<dbReference type="TreeFam" id="TF300213"/>
<dbReference type="Reactome" id="R-MMU-156827">
    <property type="pathway name" value="L13a-mediated translational silencing of Ceruloplasmin expression"/>
</dbReference>
<dbReference type="Reactome" id="R-MMU-1799339">
    <property type="pathway name" value="SRP-dependent cotranslational protein targeting to membrane"/>
</dbReference>
<dbReference type="Reactome" id="R-MMU-6791226">
    <property type="pathway name" value="Major pathway of rRNA processing in the nucleolus and cytosol"/>
</dbReference>
<dbReference type="Reactome" id="R-MMU-72689">
    <property type="pathway name" value="Formation of a pool of free 40S subunits"/>
</dbReference>
<dbReference type="Reactome" id="R-MMU-72706">
    <property type="pathway name" value="GTP hydrolysis and joining of the 60S ribosomal subunit"/>
</dbReference>
<dbReference type="Reactome" id="R-MMU-975956">
    <property type="pathway name" value="Nonsense Mediated Decay (NMD) independent of the Exon Junction Complex (EJC)"/>
</dbReference>
<dbReference type="Reactome" id="R-MMU-975957">
    <property type="pathway name" value="Nonsense Mediated Decay (NMD) enhanced by the Exon Junction Complex (EJC)"/>
</dbReference>
<dbReference type="BioGRID-ORCS" id="19982">
    <property type="hits" value="19 hits in 57 CRISPR screens"/>
</dbReference>
<dbReference type="BioGRID-ORCS" id="66483">
    <property type="hits" value="21 hits in 74 CRISPR screens"/>
</dbReference>
<dbReference type="CD-CODE" id="5E82D60E">
    <property type="entry name" value="Nucleolus"/>
</dbReference>
<dbReference type="ChiTaRS" id="Rpl36a">
    <property type="organism name" value="mouse"/>
</dbReference>
<dbReference type="PRO" id="PR:P83882"/>
<dbReference type="Proteomes" id="UP000000589">
    <property type="component" value="Chromosome 12"/>
</dbReference>
<dbReference type="Proteomes" id="UP000000589">
    <property type="component" value="Chromosome X"/>
</dbReference>
<dbReference type="RNAct" id="P83882">
    <property type="molecule type" value="protein"/>
</dbReference>
<dbReference type="Bgee" id="ENSMUSG00000049751">
    <property type="expression patterns" value="Expressed in yolk sac and 65 other cell types or tissues"/>
</dbReference>
<dbReference type="ExpressionAtlas" id="P83882">
    <property type="expression patterns" value="baseline and differential"/>
</dbReference>
<dbReference type="GO" id="GO:0005737">
    <property type="term" value="C:cytoplasm"/>
    <property type="evidence" value="ECO:0000314"/>
    <property type="project" value="ComplexPortal"/>
</dbReference>
<dbReference type="GO" id="GO:0005829">
    <property type="term" value="C:cytosol"/>
    <property type="evidence" value="ECO:0000304"/>
    <property type="project" value="Reactome"/>
</dbReference>
<dbReference type="GO" id="GO:0022625">
    <property type="term" value="C:cytosolic large ribosomal subunit"/>
    <property type="evidence" value="ECO:0000314"/>
    <property type="project" value="UniProtKB"/>
</dbReference>
<dbReference type="GO" id="GO:0098794">
    <property type="term" value="C:postsynapse"/>
    <property type="evidence" value="ECO:0000303"/>
    <property type="project" value="SynGO"/>
</dbReference>
<dbReference type="GO" id="GO:0098793">
    <property type="term" value="C:presynapse"/>
    <property type="evidence" value="ECO:0000303"/>
    <property type="project" value="SynGO"/>
</dbReference>
<dbReference type="GO" id="GO:0005840">
    <property type="term" value="C:ribosome"/>
    <property type="evidence" value="ECO:0000303"/>
    <property type="project" value="SynGO"/>
</dbReference>
<dbReference type="GO" id="GO:0045202">
    <property type="term" value="C:synapse"/>
    <property type="evidence" value="ECO:0000314"/>
    <property type="project" value="SynGO"/>
</dbReference>
<dbReference type="GO" id="GO:0003735">
    <property type="term" value="F:structural constituent of ribosome"/>
    <property type="evidence" value="ECO:0000314"/>
    <property type="project" value="UniProtKB"/>
</dbReference>
<dbReference type="GO" id="GO:0002181">
    <property type="term" value="P:cytoplasmic translation"/>
    <property type="evidence" value="ECO:0000303"/>
    <property type="project" value="ComplexPortal"/>
</dbReference>
<dbReference type="GO" id="GO:0140242">
    <property type="term" value="P:translation at postsynapse"/>
    <property type="evidence" value="ECO:0000303"/>
    <property type="project" value="SynGO"/>
</dbReference>
<dbReference type="GO" id="GO:0140236">
    <property type="term" value="P:translation at presynapse"/>
    <property type="evidence" value="ECO:0000303"/>
    <property type="project" value="SynGO"/>
</dbReference>
<dbReference type="FunFam" id="3.10.450.80:FF:000001">
    <property type="entry name" value="60S ribosomal protein L44"/>
    <property type="match status" value="1"/>
</dbReference>
<dbReference type="Gene3D" id="3.10.450.80">
    <property type="match status" value="1"/>
</dbReference>
<dbReference type="InterPro" id="IPR000552">
    <property type="entry name" value="Ribosomal_eL44"/>
</dbReference>
<dbReference type="InterPro" id="IPR053708">
    <property type="entry name" value="Ribosomal_LSU_eL42"/>
</dbReference>
<dbReference type="InterPro" id="IPR011332">
    <property type="entry name" value="Ribosomal_zn-bd"/>
</dbReference>
<dbReference type="PANTHER" id="PTHR10369">
    <property type="entry name" value="60S RIBOSOMAL PROTEIN L36A/L44"/>
    <property type="match status" value="1"/>
</dbReference>
<dbReference type="Pfam" id="PF00935">
    <property type="entry name" value="Ribosomal_L44"/>
    <property type="match status" value="1"/>
</dbReference>
<dbReference type="SUPFAM" id="SSF57829">
    <property type="entry name" value="Zn-binding ribosomal proteins"/>
    <property type="match status" value="1"/>
</dbReference>
<dbReference type="PROSITE" id="PS01172">
    <property type="entry name" value="RIBOSOMAL_L44E"/>
    <property type="match status" value="1"/>
</dbReference>
<accession>P83882</accession>
<accession>P09896</accession>
<accession>P10661</accession>
<name>RL36A_MOUSE</name>
<sequence>MVNVPKTRRTFCKKCGKHQPHKVTQYKKGKDSLYAQGKRRYDRKQSGYGGQTKPIFRKKAKTTKKIVLRLECVEPNCRSKRMLAIKRCKHFELGGDKKRKGQVIQF</sequence>
<proteinExistence type="evidence at protein level"/>
<protein>
    <recommendedName>
        <fullName evidence="3">Large ribosomal subunit protein eL42</fullName>
    </recommendedName>
    <alternativeName>
        <fullName>60S ribosomal protein L36a</fullName>
    </alternativeName>
    <alternativeName>
        <fullName>60S ribosomal protein L44</fullName>
    </alternativeName>
</protein>
<reference key="1">
    <citation type="journal article" date="1995" name="Mamm. Genome">
        <title>Sixty-nine kilobases of contiguous human genomic sequence containing the alpha-galactosidase A and Bruton's tyrosine kinase loci.</title>
        <authorList>
            <person name="Oeltjen J.C."/>
            <person name="Liu X."/>
            <person name="Lu J."/>
            <person name="Allen R.C."/>
            <person name="Muzny D.M."/>
            <person name="Belmont J.W."/>
            <person name="Gibbs R.A."/>
        </authorList>
    </citation>
    <scope>NUCLEOTIDE SEQUENCE [GENOMIC DNA]</scope>
    <source>
        <strain>C129</strain>
    </source>
</reference>
<reference key="2">
    <citation type="journal article" date="2005" name="Science">
        <title>The transcriptional landscape of the mammalian genome.</title>
        <authorList>
            <person name="Carninci P."/>
            <person name="Kasukawa T."/>
            <person name="Katayama S."/>
            <person name="Gough J."/>
            <person name="Frith M.C."/>
            <person name="Maeda N."/>
            <person name="Oyama R."/>
            <person name="Ravasi T."/>
            <person name="Lenhard B."/>
            <person name="Wells C."/>
            <person name="Kodzius R."/>
            <person name="Shimokawa K."/>
            <person name="Bajic V.B."/>
            <person name="Brenner S.E."/>
            <person name="Batalov S."/>
            <person name="Forrest A.R."/>
            <person name="Zavolan M."/>
            <person name="Davis M.J."/>
            <person name="Wilming L.G."/>
            <person name="Aidinis V."/>
            <person name="Allen J.E."/>
            <person name="Ambesi-Impiombato A."/>
            <person name="Apweiler R."/>
            <person name="Aturaliya R.N."/>
            <person name="Bailey T.L."/>
            <person name="Bansal M."/>
            <person name="Baxter L."/>
            <person name="Beisel K.W."/>
            <person name="Bersano T."/>
            <person name="Bono H."/>
            <person name="Chalk A.M."/>
            <person name="Chiu K.P."/>
            <person name="Choudhary V."/>
            <person name="Christoffels A."/>
            <person name="Clutterbuck D.R."/>
            <person name="Crowe M.L."/>
            <person name="Dalla E."/>
            <person name="Dalrymple B.P."/>
            <person name="de Bono B."/>
            <person name="Della Gatta G."/>
            <person name="di Bernardo D."/>
            <person name="Down T."/>
            <person name="Engstrom P."/>
            <person name="Fagiolini M."/>
            <person name="Faulkner G."/>
            <person name="Fletcher C.F."/>
            <person name="Fukushima T."/>
            <person name="Furuno M."/>
            <person name="Futaki S."/>
            <person name="Gariboldi M."/>
            <person name="Georgii-Hemming P."/>
            <person name="Gingeras T.R."/>
            <person name="Gojobori T."/>
            <person name="Green R.E."/>
            <person name="Gustincich S."/>
            <person name="Harbers M."/>
            <person name="Hayashi Y."/>
            <person name="Hensch T.K."/>
            <person name="Hirokawa N."/>
            <person name="Hill D."/>
            <person name="Huminiecki L."/>
            <person name="Iacono M."/>
            <person name="Ikeo K."/>
            <person name="Iwama A."/>
            <person name="Ishikawa T."/>
            <person name="Jakt M."/>
            <person name="Kanapin A."/>
            <person name="Katoh M."/>
            <person name="Kawasawa Y."/>
            <person name="Kelso J."/>
            <person name="Kitamura H."/>
            <person name="Kitano H."/>
            <person name="Kollias G."/>
            <person name="Krishnan S.P."/>
            <person name="Kruger A."/>
            <person name="Kummerfeld S.K."/>
            <person name="Kurochkin I.V."/>
            <person name="Lareau L.F."/>
            <person name="Lazarevic D."/>
            <person name="Lipovich L."/>
            <person name="Liu J."/>
            <person name="Liuni S."/>
            <person name="McWilliam S."/>
            <person name="Madan Babu M."/>
            <person name="Madera M."/>
            <person name="Marchionni L."/>
            <person name="Matsuda H."/>
            <person name="Matsuzawa S."/>
            <person name="Miki H."/>
            <person name="Mignone F."/>
            <person name="Miyake S."/>
            <person name="Morris K."/>
            <person name="Mottagui-Tabar S."/>
            <person name="Mulder N."/>
            <person name="Nakano N."/>
            <person name="Nakauchi H."/>
            <person name="Ng P."/>
            <person name="Nilsson R."/>
            <person name="Nishiguchi S."/>
            <person name="Nishikawa S."/>
            <person name="Nori F."/>
            <person name="Ohara O."/>
            <person name="Okazaki Y."/>
            <person name="Orlando V."/>
            <person name="Pang K.C."/>
            <person name="Pavan W.J."/>
            <person name="Pavesi G."/>
            <person name="Pesole G."/>
            <person name="Petrovsky N."/>
            <person name="Piazza S."/>
            <person name="Reed J."/>
            <person name="Reid J.F."/>
            <person name="Ring B.Z."/>
            <person name="Ringwald M."/>
            <person name="Rost B."/>
            <person name="Ruan Y."/>
            <person name="Salzberg S.L."/>
            <person name="Sandelin A."/>
            <person name="Schneider C."/>
            <person name="Schoenbach C."/>
            <person name="Sekiguchi K."/>
            <person name="Semple C.A."/>
            <person name="Seno S."/>
            <person name="Sessa L."/>
            <person name="Sheng Y."/>
            <person name="Shibata Y."/>
            <person name="Shimada H."/>
            <person name="Shimada K."/>
            <person name="Silva D."/>
            <person name="Sinclair B."/>
            <person name="Sperling S."/>
            <person name="Stupka E."/>
            <person name="Sugiura K."/>
            <person name="Sultana R."/>
            <person name="Takenaka Y."/>
            <person name="Taki K."/>
            <person name="Tammoja K."/>
            <person name="Tan S.L."/>
            <person name="Tang S."/>
            <person name="Taylor M.S."/>
            <person name="Tegner J."/>
            <person name="Teichmann S.A."/>
            <person name="Ueda H.R."/>
            <person name="van Nimwegen E."/>
            <person name="Verardo R."/>
            <person name="Wei C.L."/>
            <person name="Yagi K."/>
            <person name="Yamanishi H."/>
            <person name="Zabarovsky E."/>
            <person name="Zhu S."/>
            <person name="Zimmer A."/>
            <person name="Hide W."/>
            <person name="Bult C."/>
            <person name="Grimmond S.M."/>
            <person name="Teasdale R.D."/>
            <person name="Liu E.T."/>
            <person name="Brusic V."/>
            <person name="Quackenbush J."/>
            <person name="Wahlestedt C."/>
            <person name="Mattick J.S."/>
            <person name="Hume D.A."/>
            <person name="Kai C."/>
            <person name="Sasaki D."/>
            <person name="Tomaru Y."/>
            <person name="Fukuda S."/>
            <person name="Kanamori-Katayama M."/>
            <person name="Suzuki M."/>
            <person name="Aoki J."/>
            <person name="Arakawa T."/>
            <person name="Iida J."/>
            <person name="Imamura K."/>
            <person name="Itoh M."/>
            <person name="Kato T."/>
            <person name="Kawaji H."/>
            <person name="Kawagashira N."/>
            <person name="Kawashima T."/>
            <person name="Kojima M."/>
            <person name="Kondo S."/>
            <person name="Konno H."/>
            <person name="Nakano K."/>
            <person name="Ninomiya N."/>
            <person name="Nishio T."/>
            <person name="Okada M."/>
            <person name="Plessy C."/>
            <person name="Shibata K."/>
            <person name="Shiraki T."/>
            <person name="Suzuki S."/>
            <person name="Tagami M."/>
            <person name="Waki K."/>
            <person name="Watahiki A."/>
            <person name="Okamura-Oho Y."/>
            <person name="Suzuki H."/>
            <person name="Kawai J."/>
            <person name="Hayashizaki Y."/>
        </authorList>
    </citation>
    <scope>NUCLEOTIDE SEQUENCE [LARGE SCALE MRNA]</scope>
    <source>
        <strain>C57BL/6J</strain>
        <tissue>Kidney</tissue>
    </source>
</reference>
<reference key="3">
    <citation type="journal article" date="2004" name="Genome Res.">
        <title>The status, quality, and expansion of the NIH full-length cDNA project: the Mammalian Gene Collection (MGC).</title>
        <authorList>
            <consortium name="The MGC Project Team"/>
        </authorList>
    </citation>
    <scope>NUCLEOTIDE SEQUENCE [LARGE SCALE MRNA]</scope>
    <source>
        <strain>C57BL/6J</strain>
        <tissue>Brain</tissue>
        <tissue>Mammary gland</tissue>
    </source>
</reference>
<reference evidence="4 5" key="4">
    <citation type="journal article" date="2022" name="Nature">
        <title>A male germ-cell-specific ribosome controls male fertility.</title>
        <authorList>
            <person name="Li H."/>
            <person name="Huo Y."/>
            <person name="He X."/>
            <person name="Yao L."/>
            <person name="Zhang H."/>
            <person name="Cui Y."/>
            <person name="Xiao H."/>
            <person name="Xie W."/>
            <person name="Zhang D."/>
            <person name="Wang Y."/>
            <person name="Zhang S."/>
            <person name="Tu H."/>
            <person name="Cheng Y."/>
            <person name="Guo Y."/>
            <person name="Cao X."/>
            <person name="Zhu Y."/>
            <person name="Jiang T."/>
            <person name="Guo X."/>
            <person name="Qin Y."/>
            <person name="Sha J."/>
        </authorList>
    </citation>
    <scope>STRUCTURE BY ELECTRON MICROSCOPY (3.03 ANGSTROMS) OF RIBOSOME</scope>
    <scope>FUNCTION</scope>
    <scope>SUBUNIT</scope>
    <scope>SUBCELLULAR LOCATION</scope>
</reference>
<feature type="chain" id="PRO_0000149120" description="Large ribosomal subunit protein eL42">
    <location>
        <begin position="1"/>
        <end position="106"/>
    </location>
</feature>
<feature type="region of interest" description="Disordered" evidence="1">
    <location>
        <begin position="34"/>
        <end position="53"/>
    </location>
</feature>